<feature type="chain" id="PRO_1000061559" description="Putative pre-16S rRNA nuclease">
    <location>
        <begin position="1"/>
        <end position="160"/>
    </location>
</feature>
<organism>
    <name type="scientific">Cereibacter sphaeroides (strain ATCC 17029 / ATH 2.4.9)</name>
    <name type="common">Rhodobacter sphaeroides</name>
    <dbReference type="NCBI Taxonomy" id="349101"/>
    <lineage>
        <taxon>Bacteria</taxon>
        <taxon>Pseudomonadati</taxon>
        <taxon>Pseudomonadota</taxon>
        <taxon>Alphaproteobacteria</taxon>
        <taxon>Rhodobacterales</taxon>
        <taxon>Paracoccaceae</taxon>
        <taxon>Cereibacter</taxon>
    </lineage>
</organism>
<protein>
    <recommendedName>
        <fullName evidence="1">Putative pre-16S rRNA nuclease</fullName>
        <ecNumber evidence="1">3.1.-.-</ecNumber>
    </recommendedName>
</protein>
<sequence length="160" mass="17363">MIHDRIEDFLASLPRTGALAGLDLGTKTVGVAVSDGLRRIATPLLTVRRTKFTEDAAKLKAIAAERRLVGIVLGLPRNMDGSEGPRAQSTRAFARNLVQVLPLPVGFWDERLSTVAAERALLEADTSRKRRAEVIDHVAAGYILQGVLDRLDWLGREGGA</sequence>
<proteinExistence type="inferred from homology"/>
<accession>A3PJD6</accession>
<evidence type="ECO:0000255" key="1">
    <source>
        <dbReference type="HAMAP-Rule" id="MF_00651"/>
    </source>
</evidence>
<comment type="function">
    <text evidence="1">Could be a nuclease involved in processing of the 5'-end of pre-16S rRNA.</text>
</comment>
<comment type="subcellular location">
    <subcellularLocation>
        <location evidence="1">Cytoplasm</location>
    </subcellularLocation>
</comment>
<comment type="similarity">
    <text evidence="1">Belongs to the YqgF nuclease family.</text>
</comment>
<dbReference type="EC" id="3.1.-.-" evidence="1"/>
<dbReference type="EMBL" id="CP000577">
    <property type="protein sequence ID" value="ABN76452.1"/>
    <property type="molecule type" value="Genomic_DNA"/>
</dbReference>
<dbReference type="RefSeq" id="WP_002719835.1">
    <property type="nucleotide sequence ID" value="NC_009049.1"/>
</dbReference>
<dbReference type="SMR" id="A3PJD6"/>
<dbReference type="GeneID" id="3720375"/>
<dbReference type="KEGG" id="rsh:Rsph17029_1342"/>
<dbReference type="HOGENOM" id="CLU_098240_1_1_5"/>
<dbReference type="GO" id="GO:0005829">
    <property type="term" value="C:cytosol"/>
    <property type="evidence" value="ECO:0007669"/>
    <property type="project" value="TreeGrafter"/>
</dbReference>
<dbReference type="GO" id="GO:0004518">
    <property type="term" value="F:nuclease activity"/>
    <property type="evidence" value="ECO:0007669"/>
    <property type="project" value="UniProtKB-KW"/>
</dbReference>
<dbReference type="GO" id="GO:0000967">
    <property type="term" value="P:rRNA 5'-end processing"/>
    <property type="evidence" value="ECO:0007669"/>
    <property type="project" value="UniProtKB-UniRule"/>
</dbReference>
<dbReference type="CDD" id="cd16964">
    <property type="entry name" value="YqgF"/>
    <property type="match status" value="1"/>
</dbReference>
<dbReference type="Gene3D" id="3.30.420.140">
    <property type="entry name" value="YqgF/RNase H-like domain"/>
    <property type="match status" value="1"/>
</dbReference>
<dbReference type="HAMAP" id="MF_00651">
    <property type="entry name" value="Nuclease_YqgF"/>
    <property type="match status" value="1"/>
</dbReference>
<dbReference type="InterPro" id="IPR012337">
    <property type="entry name" value="RNaseH-like_sf"/>
</dbReference>
<dbReference type="InterPro" id="IPR005227">
    <property type="entry name" value="YqgF"/>
</dbReference>
<dbReference type="InterPro" id="IPR006641">
    <property type="entry name" value="YqgF/RNaseH-like_dom"/>
</dbReference>
<dbReference type="InterPro" id="IPR037027">
    <property type="entry name" value="YqgF/RNaseH-like_dom_sf"/>
</dbReference>
<dbReference type="NCBIfam" id="TIGR00250">
    <property type="entry name" value="RNAse_H_YqgF"/>
    <property type="match status" value="1"/>
</dbReference>
<dbReference type="PANTHER" id="PTHR33317">
    <property type="entry name" value="POLYNUCLEOTIDYL TRANSFERASE, RIBONUCLEASE H-LIKE SUPERFAMILY PROTEIN"/>
    <property type="match status" value="1"/>
</dbReference>
<dbReference type="PANTHER" id="PTHR33317:SF4">
    <property type="entry name" value="POLYNUCLEOTIDYL TRANSFERASE, RIBONUCLEASE H-LIKE SUPERFAMILY PROTEIN"/>
    <property type="match status" value="1"/>
</dbReference>
<dbReference type="Pfam" id="PF03652">
    <property type="entry name" value="RuvX"/>
    <property type="match status" value="1"/>
</dbReference>
<dbReference type="SMART" id="SM00732">
    <property type="entry name" value="YqgFc"/>
    <property type="match status" value="1"/>
</dbReference>
<dbReference type="SUPFAM" id="SSF53098">
    <property type="entry name" value="Ribonuclease H-like"/>
    <property type="match status" value="1"/>
</dbReference>
<keyword id="KW-0963">Cytoplasm</keyword>
<keyword id="KW-0378">Hydrolase</keyword>
<keyword id="KW-0540">Nuclease</keyword>
<keyword id="KW-0690">Ribosome biogenesis</keyword>
<name>YQGF_CERS1</name>
<gene>
    <name type="ordered locus">Rsph17029_1342</name>
</gene>
<reference key="1">
    <citation type="submission" date="2007-02" db="EMBL/GenBank/DDBJ databases">
        <title>Complete sequence of chromosome 1 of Rhodobacter sphaeroides ATCC 17029.</title>
        <authorList>
            <person name="Copeland A."/>
            <person name="Lucas S."/>
            <person name="Lapidus A."/>
            <person name="Barry K."/>
            <person name="Detter J.C."/>
            <person name="Glavina del Rio T."/>
            <person name="Hammon N."/>
            <person name="Israni S."/>
            <person name="Dalin E."/>
            <person name="Tice H."/>
            <person name="Pitluck S."/>
            <person name="Kiss H."/>
            <person name="Brettin T."/>
            <person name="Bruce D."/>
            <person name="Han C."/>
            <person name="Tapia R."/>
            <person name="Gilna P."/>
            <person name="Schmutz J."/>
            <person name="Larimer F."/>
            <person name="Land M."/>
            <person name="Hauser L."/>
            <person name="Kyrpides N."/>
            <person name="Mikhailova N."/>
            <person name="Richardson P."/>
            <person name="Mackenzie C."/>
            <person name="Choudhary M."/>
            <person name="Donohue T.J."/>
            <person name="Kaplan S."/>
        </authorList>
    </citation>
    <scope>NUCLEOTIDE SEQUENCE [LARGE SCALE GENOMIC DNA]</scope>
    <source>
        <strain>ATCC 17029 / ATH 2.4.9</strain>
    </source>
</reference>